<accession>A6Q6I6</accession>
<proteinExistence type="inferred from homology"/>
<dbReference type="EMBL" id="AP009179">
    <property type="protein sequence ID" value="BAF71095.1"/>
    <property type="molecule type" value="Genomic_DNA"/>
</dbReference>
<dbReference type="RefSeq" id="WP_011979828.1">
    <property type="nucleotide sequence ID" value="NC_009663.1"/>
</dbReference>
<dbReference type="SMR" id="A6Q6I6"/>
<dbReference type="STRING" id="387093.SUN_0135"/>
<dbReference type="KEGG" id="sun:SUN_0135"/>
<dbReference type="eggNOG" id="COG0480">
    <property type="taxonomic scope" value="Bacteria"/>
</dbReference>
<dbReference type="HOGENOM" id="CLU_002794_4_1_7"/>
<dbReference type="OrthoDB" id="9804431at2"/>
<dbReference type="Proteomes" id="UP000006378">
    <property type="component" value="Chromosome"/>
</dbReference>
<dbReference type="GO" id="GO:0005737">
    <property type="term" value="C:cytoplasm"/>
    <property type="evidence" value="ECO:0007669"/>
    <property type="project" value="UniProtKB-SubCell"/>
</dbReference>
<dbReference type="GO" id="GO:0005525">
    <property type="term" value="F:GTP binding"/>
    <property type="evidence" value="ECO:0007669"/>
    <property type="project" value="UniProtKB-UniRule"/>
</dbReference>
<dbReference type="GO" id="GO:0003924">
    <property type="term" value="F:GTPase activity"/>
    <property type="evidence" value="ECO:0007669"/>
    <property type="project" value="InterPro"/>
</dbReference>
<dbReference type="GO" id="GO:0003746">
    <property type="term" value="F:translation elongation factor activity"/>
    <property type="evidence" value="ECO:0007669"/>
    <property type="project" value="UniProtKB-UniRule"/>
</dbReference>
<dbReference type="GO" id="GO:0032790">
    <property type="term" value="P:ribosome disassembly"/>
    <property type="evidence" value="ECO:0007669"/>
    <property type="project" value="TreeGrafter"/>
</dbReference>
<dbReference type="CDD" id="cd01886">
    <property type="entry name" value="EF-G"/>
    <property type="match status" value="1"/>
</dbReference>
<dbReference type="CDD" id="cd16262">
    <property type="entry name" value="EFG_III"/>
    <property type="match status" value="1"/>
</dbReference>
<dbReference type="CDD" id="cd01434">
    <property type="entry name" value="EFG_mtEFG1_IV"/>
    <property type="match status" value="1"/>
</dbReference>
<dbReference type="CDD" id="cd03713">
    <property type="entry name" value="EFG_mtEFG_C"/>
    <property type="match status" value="1"/>
</dbReference>
<dbReference type="CDD" id="cd04088">
    <property type="entry name" value="EFG_mtEFG_II"/>
    <property type="match status" value="1"/>
</dbReference>
<dbReference type="FunFam" id="2.40.30.10:FF:000006">
    <property type="entry name" value="Elongation factor G"/>
    <property type="match status" value="1"/>
</dbReference>
<dbReference type="FunFam" id="3.30.230.10:FF:000003">
    <property type="entry name" value="Elongation factor G"/>
    <property type="match status" value="1"/>
</dbReference>
<dbReference type="FunFam" id="3.30.70.240:FF:000001">
    <property type="entry name" value="Elongation factor G"/>
    <property type="match status" value="1"/>
</dbReference>
<dbReference type="FunFam" id="3.30.70.870:FF:000001">
    <property type="entry name" value="Elongation factor G"/>
    <property type="match status" value="1"/>
</dbReference>
<dbReference type="FunFam" id="3.40.50.300:FF:000029">
    <property type="entry name" value="Elongation factor G"/>
    <property type="match status" value="1"/>
</dbReference>
<dbReference type="Gene3D" id="3.30.230.10">
    <property type="match status" value="1"/>
</dbReference>
<dbReference type="Gene3D" id="3.30.70.240">
    <property type="match status" value="1"/>
</dbReference>
<dbReference type="Gene3D" id="3.30.70.870">
    <property type="entry name" value="Elongation Factor G (Translational Gtpase), domain 3"/>
    <property type="match status" value="1"/>
</dbReference>
<dbReference type="Gene3D" id="3.40.50.300">
    <property type="entry name" value="P-loop containing nucleotide triphosphate hydrolases"/>
    <property type="match status" value="1"/>
</dbReference>
<dbReference type="Gene3D" id="2.40.30.10">
    <property type="entry name" value="Translation factors"/>
    <property type="match status" value="1"/>
</dbReference>
<dbReference type="HAMAP" id="MF_00054_B">
    <property type="entry name" value="EF_G_EF_2_B"/>
    <property type="match status" value="1"/>
</dbReference>
<dbReference type="InterPro" id="IPR053905">
    <property type="entry name" value="EF-G-like_DII"/>
</dbReference>
<dbReference type="InterPro" id="IPR041095">
    <property type="entry name" value="EFG_II"/>
</dbReference>
<dbReference type="InterPro" id="IPR009022">
    <property type="entry name" value="EFG_III"/>
</dbReference>
<dbReference type="InterPro" id="IPR035647">
    <property type="entry name" value="EFG_III/V"/>
</dbReference>
<dbReference type="InterPro" id="IPR047872">
    <property type="entry name" value="EFG_IV"/>
</dbReference>
<dbReference type="InterPro" id="IPR035649">
    <property type="entry name" value="EFG_V"/>
</dbReference>
<dbReference type="InterPro" id="IPR000640">
    <property type="entry name" value="EFG_V-like"/>
</dbReference>
<dbReference type="InterPro" id="IPR031157">
    <property type="entry name" value="G_TR_CS"/>
</dbReference>
<dbReference type="InterPro" id="IPR027417">
    <property type="entry name" value="P-loop_NTPase"/>
</dbReference>
<dbReference type="InterPro" id="IPR020568">
    <property type="entry name" value="Ribosomal_Su5_D2-typ_SF"/>
</dbReference>
<dbReference type="InterPro" id="IPR014721">
    <property type="entry name" value="Ribsml_uS5_D2-typ_fold_subgr"/>
</dbReference>
<dbReference type="InterPro" id="IPR005225">
    <property type="entry name" value="Small_GTP-bd"/>
</dbReference>
<dbReference type="InterPro" id="IPR000795">
    <property type="entry name" value="T_Tr_GTP-bd_dom"/>
</dbReference>
<dbReference type="InterPro" id="IPR009000">
    <property type="entry name" value="Transl_B-barrel_sf"/>
</dbReference>
<dbReference type="InterPro" id="IPR004540">
    <property type="entry name" value="Transl_elong_EFG/EF2"/>
</dbReference>
<dbReference type="InterPro" id="IPR005517">
    <property type="entry name" value="Transl_elong_EFG/EF2_IV"/>
</dbReference>
<dbReference type="NCBIfam" id="TIGR00484">
    <property type="entry name" value="EF-G"/>
    <property type="match status" value="1"/>
</dbReference>
<dbReference type="NCBIfam" id="NF009379">
    <property type="entry name" value="PRK12740.1-3"/>
    <property type="match status" value="1"/>
</dbReference>
<dbReference type="NCBIfam" id="NF009381">
    <property type="entry name" value="PRK12740.1-5"/>
    <property type="match status" value="1"/>
</dbReference>
<dbReference type="NCBIfam" id="TIGR00231">
    <property type="entry name" value="small_GTP"/>
    <property type="match status" value="1"/>
</dbReference>
<dbReference type="PANTHER" id="PTHR43261:SF1">
    <property type="entry name" value="RIBOSOME-RELEASING FACTOR 2, MITOCHONDRIAL"/>
    <property type="match status" value="1"/>
</dbReference>
<dbReference type="PANTHER" id="PTHR43261">
    <property type="entry name" value="TRANSLATION ELONGATION FACTOR G-RELATED"/>
    <property type="match status" value="1"/>
</dbReference>
<dbReference type="Pfam" id="PF22042">
    <property type="entry name" value="EF-G_D2"/>
    <property type="match status" value="1"/>
</dbReference>
<dbReference type="Pfam" id="PF00679">
    <property type="entry name" value="EFG_C"/>
    <property type="match status" value="1"/>
</dbReference>
<dbReference type="Pfam" id="PF14492">
    <property type="entry name" value="EFG_III"/>
    <property type="match status" value="1"/>
</dbReference>
<dbReference type="Pfam" id="PF03764">
    <property type="entry name" value="EFG_IV"/>
    <property type="match status" value="1"/>
</dbReference>
<dbReference type="Pfam" id="PF00009">
    <property type="entry name" value="GTP_EFTU"/>
    <property type="match status" value="1"/>
</dbReference>
<dbReference type="PRINTS" id="PR00315">
    <property type="entry name" value="ELONGATNFCT"/>
</dbReference>
<dbReference type="SMART" id="SM00838">
    <property type="entry name" value="EFG_C"/>
    <property type="match status" value="1"/>
</dbReference>
<dbReference type="SMART" id="SM00889">
    <property type="entry name" value="EFG_IV"/>
    <property type="match status" value="1"/>
</dbReference>
<dbReference type="SUPFAM" id="SSF54980">
    <property type="entry name" value="EF-G C-terminal domain-like"/>
    <property type="match status" value="2"/>
</dbReference>
<dbReference type="SUPFAM" id="SSF52540">
    <property type="entry name" value="P-loop containing nucleoside triphosphate hydrolases"/>
    <property type="match status" value="1"/>
</dbReference>
<dbReference type="SUPFAM" id="SSF54211">
    <property type="entry name" value="Ribosomal protein S5 domain 2-like"/>
    <property type="match status" value="1"/>
</dbReference>
<dbReference type="SUPFAM" id="SSF50447">
    <property type="entry name" value="Translation proteins"/>
    <property type="match status" value="1"/>
</dbReference>
<dbReference type="PROSITE" id="PS00301">
    <property type="entry name" value="G_TR_1"/>
    <property type="match status" value="1"/>
</dbReference>
<dbReference type="PROSITE" id="PS51722">
    <property type="entry name" value="G_TR_2"/>
    <property type="match status" value="1"/>
</dbReference>
<organism>
    <name type="scientific">Sulfurovum sp. (strain NBC37-1)</name>
    <dbReference type="NCBI Taxonomy" id="387093"/>
    <lineage>
        <taxon>Bacteria</taxon>
        <taxon>Pseudomonadati</taxon>
        <taxon>Campylobacterota</taxon>
        <taxon>Epsilonproteobacteria</taxon>
        <taxon>Campylobacterales</taxon>
        <taxon>Sulfurovaceae</taxon>
        <taxon>Sulfurovum</taxon>
    </lineage>
</organism>
<reference key="1">
    <citation type="journal article" date="2007" name="Proc. Natl. Acad. Sci. U.S.A.">
        <title>Deep-sea vent epsilon-proteobacterial genomes provide insights into emergence of pathogens.</title>
        <authorList>
            <person name="Nakagawa S."/>
            <person name="Takaki Y."/>
            <person name="Shimamura S."/>
            <person name="Reysenbach A.-L."/>
            <person name="Takai K."/>
            <person name="Horikoshi K."/>
        </authorList>
    </citation>
    <scope>NUCLEOTIDE SEQUENCE [LARGE SCALE GENOMIC DNA]</scope>
    <source>
        <strain>NBC37-1</strain>
    </source>
</reference>
<gene>
    <name evidence="1" type="primary">fusA</name>
    <name type="ordered locus">SUN_0135</name>
</gene>
<protein>
    <recommendedName>
        <fullName evidence="1">Elongation factor G</fullName>
        <shortName evidence="1">EF-G</shortName>
    </recommendedName>
</protein>
<sequence length="696" mass="77450">MARTHKLEDVRNIGIAAHIDAGKTTTTERILFYTGVEHKIGEVHDGAATMDWMEQEQERGITITSAATTCEWLGKQINIIDTPGHVDFTIEVERSMRVLDGAVSVFCAVGGVQPQSETVWRQRNRYGVPSLVFVNKMDRTGADFLEVERQIRDRLKGNPLVIQLPIGAEENFEGVVDLVKMKEIVWDADAEMGSAYHEQDIRPELQEQAEAFREKLIEGISEVDGNEELMEKYMEGEELTTEEIMAGIKAATIHMHVVPMLPGTAFKNKGVQTLLDAVVHYLPSPVEAPPIKGTKMEDEDVEVVVESTDDGEFASLAFKIMTDPFVGQLTFIRVYRGSLESGSYVLNSTKEKKERVGRIMKMHAIKREEISEIYAGEIGAVVGLKNTTTGDTLCSDKDKVVLERMDFPDPVISVAVEPKTKADQEKMGIALSKLAAEDPSFRVNTDEESGQTIISGMGELHLEILVDRMKREFKVEAEVGAPQVAYRETIRKAVNKEYKYAKQSGGRGQYGHVFLKIEPQEPGFGYEFVDAVKGGVVPKEFIQPVNKGVQEAMARGIQAGYPVEDVKVTLYDGSYHDVDSSEMAFKLAGSMGFRDGCREANPVILEPMMKVEVEVPEEFMGDVIGDVAKRRGQVSGMDDRAGNKIVNAFVPLSEMFGYSTDLRSMTQGRATYAMEFDHYEEVPQNVAKEIIEKRNS</sequence>
<evidence type="ECO:0000255" key="1">
    <source>
        <dbReference type="HAMAP-Rule" id="MF_00054"/>
    </source>
</evidence>
<feature type="chain" id="PRO_1000008893" description="Elongation factor G">
    <location>
        <begin position="1"/>
        <end position="696"/>
    </location>
</feature>
<feature type="domain" description="tr-type G">
    <location>
        <begin position="8"/>
        <end position="286"/>
    </location>
</feature>
<feature type="binding site" evidence="1">
    <location>
        <begin position="17"/>
        <end position="24"/>
    </location>
    <ligand>
        <name>GTP</name>
        <dbReference type="ChEBI" id="CHEBI:37565"/>
    </ligand>
</feature>
<feature type="binding site" evidence="1">
    <location>
        <begin position="81"/>
        <end position="85"/>
    </location>
    <ligand>
        <name>GTP</name>
        <dbReference type="ChEBI" id="CHEBI:37565"/>
    </ligand>
</feature>
<feature type="binding site" evidence="1">
    <location>
        <begin position="135"/>
        <end position="138"/>
    </location>
    <ligand>
        <name>GTP</name>
        <dbReference type="ChEBI" id="CHEBI:37565"/>
    </ligand>
</feature>
<comment type="function">
    <text evidence="1">Catalyzes the GTP-dependent ribosomal translocation step during translation elongation. During this step, the ribosome changes from the pre-translocational (PRE) to the post-translocational (POST) state as the newly formed A-site-bound peptidyl-tRNA and P-site-bound deacylated tRNA move to the P and E sites, respectively. Catalyzes the coordinated movement of the two tRNA molecules, the mRNA and conformational changes in the ribosome.</text>
</comment>
<comment type="subcellular location">
    <subcellularLocation>
        <location evidence="1">Cytoplasm</location>
    </subcellularLocation>
</comment>
<comment type="similarity">
    <text evidence="1">Belongs to the TRAFAC class translation factor GTPase superfamily. Classic translation factor GTPase family. EF-G/EF-2 subfamily.</text>
</comment>
<name>EFG_SULNB</name>
<keyword id="KW-0963">Cytoplasm</keyword>
<keyword id="KW-0251">Elongation factor</keyword>
<keyword id="KW-0342">GTP-binding</keyword>
<keyword id="KW-0547">Nucleotide-binding</keyword>
<keyword id="KW-0648">Protein biosynthesis</keyword>